<reference key="1">
    <citation type="journal article" date="2004" name="Nature">
        <title>Genome evolution in yeasts.</title>
        <authorList>
            <person name="Dujon B."/>
            <person name="Sherman D."/>
            <person name="Fischer G."/>
            <person name="Durrens P."/>
            <person name="Casaregola S."/>
            <person name="Lafontaine I."/>
            <person name="de Montigny J."/>
            <person name="Marck C."/>
            <person name="Neuveglise C."/>
            <person name="Talla E."/>
            <person name="Goffard N."/>
            <person name="Frangeul L."/>
            <person name="Aigle M."/>
            <person name="Anthouard V."/>
            <person name="Babour A."/>
            <person name="Barbe V."/>
            <person name="Barnay S."/>
            <person name="Blanchin S."/>
            <person name="Beckerich J.-M."/>
            <person name="Beyne E."/>
            <person name="Bleykasten C."/>
            <person name="Boisrame A."/>
            <person name="Boyer J."/>
            <person name="Cattolico L."/>
            <person name="Confanioleri F."/>
            <person name="de Daruvar A."/>
            <person name="Despons L."/>
            <person name="Fabre E."/>
            <person name="Fairhead C."/>
            <person name="Ferry-Dumazet H."/>
            <person name="Groppi A."/>
            <person name="Hantraye F."/>
            <person name="Hennequin C."/>
            <person name="Jauniaux N."/>
            <person name="Joyet P."/>
            <person name="Kachouri R."/>
            <person name="Kerrest A."/>
            <person name="Koszul R."/>
            <person name="Lemaire M."/>
            <person name="Lesur I."/>
            <person name="Ma L."/>
            <person name="Muller H."/>
            <person name="Nicaud J.-M."/>
            <person name="Nikolski M."/>
            <person name="Oztas S."/>
            <person name="Ozier-Kalogeropoulos O."/>
            <person name="Pellenz S."/>
            <person name="Potier S."/>
            <person name="Richard G.-F."/>
            <person name="Straub M.-L."/>
            <person name="Suleau A."/>
            <person name="Swennen D."/>
            <person name="Tekaia F."/>
            <person name="Wesolowski-Louvel M."/>
            <person name="Westhof E."/>
            <person name="Wirth B."/>
            <person name="Zeniou-Meyer M."/>
            <person name="Zivanovic Y."/>
            <person name="Bolotin-Fukuhara M."/>
            <person name="Thierry A."/>
            <person name="Bouchier C."/>
            <person name="Caudron B."/>
            <person name="Scarpelli C."/>
            <person name="Gaillardin C."/>
            <person name="Weissenbach J."/>
            <person name="Wincker P."/>
            <person name="Souciet J.-L."/>
        </authorList>
    </citation>
    <scope>NUCLEOTIDE SEQUENCE [LARGE SCALE GENOMIC DNA]</scope>
    <source>
        <strain>CLIB 122 / E 150</strain>
    </source>
</reference>
<dbReference type="EC" id="2.1.1.17" evidence="1"/>
<dbReference type="EMBL" id="CR382131">
    <property type="protein sequence ID" value="CAG79194.1"/>
    <property type="molecule type" value="Genomic_DNA"/>
</dbReference>
<dbReference type="RefSeq" id="XP_503613.1">
    <property type="nucleotide sequence ID" value="XM_503613.1"/>
</dbReference>
<dbReference type="SMR" id="Q6C6U9"/>
<dbReference type="FunCoup" id="Q6C6U9">
    <property type="interactions" value="63"/>
</dbReference>
<dbReference type="STRING" id="284591.Q6C6U9"/>
<dbReference type="EnsemblFungi" id="CAG79194">
    <property type="protein sequence ID" value="CAG79194"/>
    <property type="gene ID" value="YALI0_E06061g"/>
</dbReference>
<dbReference type="KEGG" id="yli:2912345"/>
<dbReference type="VEuPathDB" id="FungiDB:YALI0_E06061g"/>
<dbReference type="HOGENOM" id="CLU_005987_0_1_1"/>
<dbReference type="InParanoid" id="Q6C6U9"/>
<dbReference type="OMA" id="RIWYSVG"/>
<dbReference type="OrthoDB" id="107051at4891"/>
<dbReference type="UniPathway" id="UPA00753"/>
<dbReference type="Proteomes" id="UP000001300">
    <property type="component" value="Chromosome E"/>
</dbReference>
<dbReference type="GO" id="GO:0032541">
    <property type="term" value="C:cortical endoplasmic reticulum"/>
    <property type="evidence" value="ECO:0007669"/>
    <property type="project" value="EnsemblFungi"/>
</dbReference>
<dbReference type="GO" id="GO:0005789">
    <property type="term" value="C:endoplasmic reticulum membrane"/>
    <property type="evidence" value="ECO:0007669"/>
    <property type="project" value="UniProtKB-SubCell"/>
</dbReference>
<dbReference type="GO" id="GO:0097038">
    <property type="term" value="C:perinuclear endoplasmic reticulum"/>
    <property type="evidence" value="ECO:0007669"/>
    <property type="project" value="EnsemblFungi"/>
</dbReference>
<dbReference type="GO" id="GO:0004608">
    <property type="term" value="F:phosphatidylethanolamine N-methyltransferase activity"/>
    <property type="evidence" value="ECO:0000318"/>
    <property type="project" value="GO_Central"/>
</dbReference>
<dbReference type="GO" id="GO:0032259">
    <property type="term" value="P:methylation"/>
    <property type="evidence" value="ECO:0007669"/>
    <property type="project" value="UniProtKB-KW"/>
</dbReference>
<dbReference type="GO" id="GO:0006656">
    <property type="term" value="P:phosphatidylcholine biosynthetic process"/>
    <property type="evidence" value="ECO:0000318"/>
    <property type="project" value="GO_Central"/>
</dbReference>
<dbReference type="Gene3D" id="1.20.120.1630">
    <property type="match status" value="1"/>
</dbReference>
<dbReference type="Gene3D" id="2.60.40.2840">
    <property type="match status" value="1"/>
</dbReference>
<dbReference type="HAMAP" id="MF_03217">
    <property type="entry name" value="PEMT"/>
    <property type="match status" value="1"/>
</dbReference>
<dbReference type="InterPro" id="IPR007318">
    <property type="entry name" value="Phopholipid_MeTrfase"/>
</dbReference>
<dbReference type="InterPro" id="IPR016219">
    <property type="entry name" value="Phosphatid-EA_MeTrfase_fun"/>
</dbReference>
<dbReference type="PANTHER" id="PTHR32138">
    <property type="entry name" value="PHOSPHATIDYLETHANOLAMINE N-METHYLTRANSFERASE"/>
    <property type="match status" value="1"/>
</dbReference>
<dbReference type="PANTHER" id="PTHR32138:SF0">
    <property type="entry name" value="PHOSPHATIDYLETHANOLAMINE N-METHYLTRANSFERASE"/>
    <property type="match status" value="1"/>
</dbReference>
<dbReference type="Pfam" id="PF04191">
    <property type="entry name" value="PEMT"/>
    <property type="match status" value="2"/>
</dbReference>
<dbReference type="PIRSF" id="PIRSF000383">
    <property type="entry name" value="PEAMT"/>
    <property type="match status" value="1"/>
</dbReference>
<dbReference type="PROSITE" id="PS51598">
    <property type="entry name" value="SAM_CHO2"/>
    <property type="match status" value="1"/>
</dbReference>
<accession>Q6C6U9</accession>
<sequence>MAVPSAAIKASGVDMGDLKKRHDTKLDVEESVIDEKINENESDEKLTEKLTEKLTEKLTEKTSTEPIAYVGKCPDGTTFIVPETEDMLTNLFDPRITKSLTDVIIVSILVTFMGLFFVVPKSWRVPLYLFLFAAWRLAYNGGIGWLLHNQSNYHKLTKWALKYKVFDKDNKTWWHQLIKREFETRFQNQPNYSFYEVPVEFNTWILFRHVVDLILMSDFTCYFMLAWSCALSVRTNQPWWLVIGRWLAGALMLAFNLWAKTDAHRVVKDYAWYWGDFFFLKDMELTFDGVFEMAPHPMYSIGYAGFYAASLMACSYTLFLASLAGHAAQFVFLSIVENPHIEKTYNPHQPKQRRKASHVRDRSSIQLGLDQKQKDELSAIVEGDESVSIASTPISTTFDEPETVQKHSLPPLVVFSNFQITRVTDIMTVGAAVYTMLLYFLPANRLWYTVTFFMALSARLFHTLGLGVILRRQSERRSFTKTFLKFGIYPFEAYEQWQVWYNVSTVLSYTTFGLFCLRQWRAPSTDPLWPLKYILGALLIALHGWTSKSIHDSLGHFGWFYGDFFLDRKQNLTYSGIYRYLNNPERFFGIAGIWGLALMTNSPGVGILAFLWTLEGMAFIKFVEQPHMQRIYGTSIRHDAGVTKTIKNSLKLPSPFEKRVRQFQGSVDKVINDTLTVVEEFIGLAKPTLNEVVNDSKILLRQYPAKLTLTRMLDVPENIDTADYSVKLVGGEKCADSNRISYAFGTPIHVKWQASPNRSAKDWIGLYRVHDNTSPEVTSLPSKGRWSGIDETGHESHLDGIVSSSKTNGEVVFRGDTLFWECGVYEFRYHHAGKHTVLSTSEPFEIVAPKIDLSGEVDAKTLALEILPIVQRCFSLSMEFPPEEVDDYWALEEPKVINRVQAAVQAYFNVELAQEVLQSDESVENLAERLLRIRDALKGLTV</sequence>
<comment type="function">
    <text evidence="1">Catalyzes the first step of the methylation pathway of phosphatidylcholine biosynthesis, the SAM-dependent methylation of phosphatidylethanolamine (PE) to phosphatidylmonomethylethanolamine (PMME).</text>
</comment>
<comment type="catalytic activity">
    <reaction evidence="1">
        <text>a 1,2-diacyl-sn-glycero-3-phosphoethanolamine + S-adenosyl-L-methionine = a 1,2-diacyl-sn-glycero-3-phospho-N-methylethanolamine + S-adenosyl-L-homocysteine + H(+)</text>
        <dbReference type="Rhea" id="RHEA:11164"/>
        <dbReference type="ChEBI" id="CHEBI:15378"/>
        <dbReference type="ChEBI" id="CHEBI:57856"/>
        <dbReference type="ChEBI" id="CHEBI:59789"/>
        <dbReference type="ChEBI" id="CHEBI:64573"/>
        <dbReference type="ChEBI" id="CHEBI:64612"/>
        <dbReference type="EC" id="2.1.1.17"/>
    </reaction>
</comment>
<comment type="pathway">
    <text evidence="1">Phospholipid metabolism; phosphatidylcholine biosynthesis.</text>
</comment>
<comment type="subcellular location">
    <subcellularLocation>
        <location evidence="1">Endoplasmic reticulum membrane</location>
        <topology evidence="1">Multi-pass membrane protein</topology>
    </subcellularLocation>
</comment>
<comment type="similarity">
    <text evidence="1">Belongs to the class VI-like SAM-binding methyltransferase superfamily. CHO2 family.</text>
</comment>
<gene>
    <name type="primary">CHO2</name>
    <name type="ordered locus">YALI0E06061g</name>
</gene>
<proteinExistence type="inferred from homology"/>
<keyword id="KW-0256">Endoplasmic reticulum</keyword>
<keyword id="KW-0444">Lipid biosynthesis</keyword>
<keyword id="KW-0443">Lipid metabolism</keyword>
<keyword id="KW-0472">Membrane</keyword>
<keyword id="KW-0489">Methyltransferase</keyword>
<keyword id="KW-0594">Phospholipid biosynthesis</keyword>
<keyword id="KW-1208">Phospholipid metabolism</keyword>
<keyword id="KW-1185">Reference proteome</keyword>
<keyword id="KW-0949">S-adenosyl-L-methionine</keyword>
<keyword id="KW-0808">Transferase</keyword>
<keyword id="KW-0812">Transmembrane</keyword>
<keyword id="KW-1133">Transmembrane helix</keyword>
<organism>
    <name type="scientific">Yarrowia lipolytica (strain CLIB 122 / E 150)</name>
    <name type="common">Yeast</name>
    <name type="synonym">Candida lipolytica</name>
    <dbReference type="NCBI Taxonomy" id="284591"/>
    <lineage>
        <taxon>Eukaryota</taxon>
        <taxon>Fungi</taxon>
        <taxon>Dikarya</taxon>
        <taxon>Ascomycota</taxon>
        <taxon>Saccharomycotina</taxon>
        <taxon>Dipodascomycetes</taxon>
        <taxon>Dipodascales</taxon>
        <taxon>Dipodascales incertae sedis</taxon>
        <taxon>Yarrowia</taxon>
    </lineage>
</organism>
<protein>
    <recommendedName>
        <fullName evidence="1">Phosphatidylethanolamine N-methyltransferase</fullName>
        <shortName evidence="1">PE methyltransferase</shortName>
        <shortName evidence="1">PEAMT</shortName>
        <shortName evidence="1">PEMT</shortName>
        <ecNumber evidence="1">2.1.1.17</ecNumber>
    </recommendedName>
</protein>
<name>CHO2_YARLI</name>
<feature type="chain" id="PRO_0000405924" description="Phosphatidylethanolamine N-methyltransferase">
    <location>
        <begin position="1"/>
        <end position="942"/>
    </location>
</feature>
<feature type="topological domain" description="Lumenal" evidence="1">
    <location>
        <begin position="1"/>
        <end position="99"/>
    </location>
</feature>
<feature type="transmembrane region" description="Helical" evidence="1">
    <location>
        <begin position="100"/>
        <end position="120"/>
    </location>
</feature>
<feature type="topological domain" description="Cytoplasmic" evidence="1">
    <location>
        <begin position="121"/>
        <end position="126"/>
    </location>
</feature>
<feature type="transmembrane region" description="Helical" evidence="1">
    <location>
        <begin position="127"/>
        <end position="147"/>
    </location>
</feature>
<feature type="topological domain" description="Lumenal" evidence="1">
    <location>
        <begin position="148"/>
        <end position="212"/>
    </location>
</feature>
<feature type="transmembrane region" description="Helical" evidence="1">
    <location>
        <begin position="213"/>
        <end position="233"/>
    </location>
</feature>
<feature type="topological domain" description="Cytoplasmic" evidence="1">
    <location>
        <begin position="234"/>
        <end position="238"/>
    </location>
</feature>
<feature type="transmembrane region" description="Helical" evidence="1">
    <location>
        <begin position="239"/>
        <end position="259"/>
    </location>
</feature>
<feature type="topological domain" description="Lumenal" evidence="1">
    <location>
        <begin position="260"/>
        <end position="292"/>
    </location>
</feature>
<feature type="transmembrane region" description="Helical" evidence="1">
    <location>
        <begin position="293"/>
        <end position="313"/>
    </location>
</feature>
<feature type="topological domain" description="Cytoplasmic" evidence="1">
    <location>
        <begin position="314"/>
        <end position="315"/>
    </location>
</feature>
<feature type="transmembrane region" description="Helical" evidence="1">
    <location>
        <begin position="316"/>
        <end position="336"/>
    </location>
</feature>
<feature type="topological domain" description="Lumenal" evidence="1">
    <location>
        <begin position="337"/>
        <end position="422"/>
    </location>
</feature>
<feature type="transmembrane region" description="Helical" evidence="1">
    <location>
        <begin position="423"/>
        <end position="443"/>
    </location>
</feature>
<feature type="topological domain" description="Cytoplasmic" evidence="1">
    <location>
        <begin position="444"/>
        <end position="449"/>
    </location>
</feature>
<feature type="transmembrane region" description="Helical" evidence="1">
    <location>
        <begin position="450"/>
        <end position="470"/>
    </location>
</feature>
<feature type="topological domain" description="Lumenal" evidence="1">
    <location>
        <begin position="471"/>
        <end position="496"/>
    </location>
</feature>
<feature type="transmembrane region" description="Helical" evidence="1">
    <location>
        <begin position="497"/>
        <end position="517"/>
    </location>
</feature>
<feature type="topological domain" description="Cytoplasmic" evidence="1">
    <location>
        <begin position="518"/>
        <end position="526"/>
    </location>
</feature>
<feature type="transmembrane region" description="Helical" evidence="1">
    <location>
        <begin position="527"/>
        <end position="547"/>
    </location>
</feature>
<feature type="topological domain" description="Lumenal" evidence="1">
    <location>
        <begin position="548"/>
        <end position="589"/>
    </location>
</feature>
<feature type="transmembrane region" description="Helical" evidence="1">
    <location>
        <begin position="590"/>
        <end position="610"/>
    </location>
</feature>
<feature type="topological domain" description="Cytoplasmic" evidence="1">
    <location>
        <begin position="611"/>
        <end position="942"/>
    </location>
</feature>
<feature type="region of interest" description="Disordered" evidence="2">
    <location>
        <begin position="345"/>
        <end position="364"/>
    </location>
</feature>
<evidence type="ECO:0000255" key="1">
    <source>
        <dbReference type="HAMAP-Rule" id="MF_03217"/>
    </source>
</evidence>
<evidence type="ECO:0000256" key="2">
    <source>
        <dbReference type="SAM" id="MobiDB-lite"/>
    </source>
</evidence>